<keyword id="KW-0222">Digestion</keyword>
<keyword id="KW-0903">Direct protein sequencing</keyword>
<keyword id="KW-1015">Disulfide bond</keyword>
<keyword id="KW-0378">Hydrolase</keyword>
<keyword id="KW-0645">Protease</keyword>
<keyword id="KW-0964">Secreted</keyword>
<keyword id="KW-0720">Serine protease</keyword>
<keyword id="KW-0732">Signal</keyword>
<keyword id="KW-0865">Zymogen</keyword>
<feature type="signal peptide" evidence="2">
    <location>
        <begin position="1"/>
        <end position="16"/>
    </location>
</feature>
<feature type="propeptide" id="PRO_0000028297" description="Activation peptide" evidence="4">
    <location>
        <begin position="17"/>
        <end position="26"/>
    </location>
</feature>
<feature type="chain" id="PRO_0000028298" description="Trypsin">
    <location>
        <begin position="27"/>
        <end position="254"/>
    </location>
</feature>
<feature type="domain" description="Peptidase S1" evidence="3">
    <location>
        <begin position="27"/>
        <end position="252"/>
    </location>
</feature>
<feature type="active site" description="Charge relay system" evidence="1">
    <location>
        <position position="68"/>
    </location>
</feature>
<feature type="active site" description="Charge relay system" evidence="1">
    <location>
        <position position="113"/>
    </location>
</feature>
<feature type="active site" description="Charge relay system" evidence="1">
    <location>
        <position position="208"/>
    </location>
</feature>
<feature type="site" description="Required for specificity" evidence="1">
    <location>
        <position position="202"/>
    </location>
</feature>
<feature type="disulfide bond" evidence="3">
    <location>
        <begin position="53"/>
        <end position="69"/>
    </location>
</feature>
<feature type="disulfide bond" evidence="3">
    <location>
        <begin position="154"/>
        <end position="158"/>
    </location>
</feature>
<feature type="disulfide bond" evidence="3">
    <location>
        <begin position="178"/>
        <end position="195"/>
    </location>
</feature>
<feature type="disulfide bond" evidence="3">
    <location>
        <begin position="204"/>
        <end position="228"/>
    </location>
</feature>
<name>TRYP_SARBU</name>
<proteinExistence type="evidence at protein level"/>
<evidence type="ECO:0000250" key="1"/>
<evidence type="ECO:0000255" key="2"/>
<evidence type="ECO:0000255" key="3">
    <source>
        <dbReference type="PROSITE-ProRule" id="PRU00274"/>
    </source>
</evidence>
<evidence type="ECO:0000269" key="4">
    <source>
    </source>
</evidence>
<sequence length="254" mass="27309">MLRFIAVFALVNCALAGTLPNDLDGRIVNGVDTTIEAHPYQVPLQNAALSHFCGGSIISEDLVVTAAHCMQSYTASQIKVRLGSTIYNEGGELVSVKAFKFHEGYNPKTMVNDVALIKLATPVRESSKIRYIRLADRTPPTGTPAVVTGWGTKCFLTCVSLPKTLQEVEVDIVDQKACASNEFKYGSQIQDTMVCAYALKKDACQGDSGGPLVANNQLVGIVSWGSGCARVGYPGVFCDVPSVRSWIEKTAKEL</sequence>
<comment type="function">
    <text>Involved in digestion of a protein meal.</text>
</comment>
<comment type="catalytic activity">
    <reaction>
        <text>Preferential cleavage: Arg-|-Xaa, Lys-|-Xaa.</text>
        <dbReference type="EC" id="3.4.21.4"/>
    </reaction>
</comment>
<comment type="subcellular location">
    <subcellularLocation>
        <location>Secreted</location>
        <location>Extracellular space</location>
    </subcellularLocation>
</comment>
<comment type="similarity">
    <text evidence="3">Belongs to the peptidase S1 family.</text>
</comment>
<dbReference type="EC" id="3.4.21.4"/>
<dbReference type="EMBL" id="X94691">
    <property type="protein sequence ID" value="CAA64354.1"/>
    <property type="molecule type" value="mRNA"/>
</dbReference>
<dbReference type="PIR" id="S65465">
    <property type="entry name" value="S65465"/>
</dbReference>
<dbReference type="SMR" id="P51588"/>
<dbReference type="MEROPS" id="S01.A85"/>
<dbReference type="GO" id="GO:0005576">
    <property type="term" value="C:extracellular region"/>
    <property type="evidence" value="ECO:0007669"/>
    <property type="project" value="UniProtKB-SubCell"/>
</dbReference>
<dbReference type="GO" id="GO:0004252">
    <property type="term" value="F:serine-type endopeptidase activity"/>
    <property type="evidence" value="ECO:0007669"/>
    <property type="project" value="UniProtKB-EC"/>
</dbReference>
<dbReference type="GO" id="GO:0007586">
    <property type="term" value="P:digestion"/>
    <property type="evidence" value="ECO:0007669"/>
    <property type="project" value="UniProtKB-KW"/>
</dbReference>
<dbReference type="GO" id="GO:0006508">
    <property type="term" value="P:proteolysis"/>
    <property type="evidence" value="ECO:0007669"/>
    <property type="project" value="UniProtKB-KW"/>
</dbReference>
<dbReference type="CDD" id="cd00190">
    <property type="entry name" value="Tryp_SPc"/>
    <property type="match status" value="1"/>
</dbReference>
<dbReference type="FunFam" id="2.40.10.10:FF:000077">
    <property type="entry name" value="Predicted protein"/>
    <property type="match status" value="1"/>
</dbReference>
<dbReference type="Gene3D" id="2.40.10.10">
    <property type="entry name" value="Trypsin-like serine proteases"/>
    <property type="match status" value="1"/>
</dbReference>
<dbReference type="InterPro" id="IPR050430">
    <property type="entry name" value="Peptidase_S1"/>
</dbReference>
<dbReference type="InterPro" id="IPR009003">
    <property type="entry name" value="Peptidase_S1_PA"/>
</dbReference>
<dbReference type="InterPro" id="IPR043504">
    <property type="entry name" value="Peptidase_S1_PA_chymotrypsin"/>
</dbReference>
<dbReference type="InterPro" id="IPR001314">
    <property type="entry name" value="Peptidase_S1A"/>
</dbReference>
<dbReference type="InterPro" id="IPR001254">
    <property type="entry name" value="Trypsin_dom"/>
</dbReference>
<dbReference type="InterPro" id="IPR018114">
    <property type="entry name" value="TRYPSIN_HIS"/>
</dbReference>
<dbReference type="InterPro" id="IPR033116">
    <property type="entry name" value="TRYPSIN_SER"/>
</dbReference>
<dbReference type="PANTHER" id="PTHR24276:SF94">
    <property type="entry name" value="AT20289P-RELATED"/>
    <property type="match status" value="1"/>
</dbReference>
<dbReference type="PANTHER" id="PTHR24276">
    <property type="entry name" value="POLYSERASE-RELATED"/>
    <property type="match status" value="1"/>
</dbReference>
<dbReference type="Pfam" id="PF00089">
    <property type="entry name" value="Trypsin"/>
    <property type="match status" value="1"/>
</dbReference>
<dbReference type="PRINTS" id="PR00722">
    <property type="entry name" value="CHYMOTRYPSIN"/>
</dbReference>
<dbReference type="SMART" id="SM00020">
    <property type="entry name" value="Tryp_SPc"/>
    <property type="match status" value="1"/>
</dbReference>
<dbReference type="SUPFAM" id="SSF50494">
    <property type="entry name" value="Trypsin-like serine proteases"/>
    <property type="match status" value="1"/>
</dbReference>
<dbReference type="PROSITE" id="PS50240">
    <property type="entry name" value="TRYPSIN_DOM"/>
    <property type="match status" value="1"/>
</dbReference>
<dbReference type="PROSITE" id="PS00134">
    <property type="entry name" value="TRYPSIN_HIS"/>
    <property type="match status" value="1"/>
</dbReference>
<dbReference type="PROSITE" id="PS00135">
    <property type="entry name" value="TRYPSIN_SER"/>
    <property type="match status" value="1"/>
</dbReference>
<organism>
    <name type="scientific">Sarcophaga bullata</name>
    <name type="common">Grey flesh fly</name>
    <name type="synonym">Neobellieria bullata</name>
    <dbReference type="NCBI Taxonomy" id="7385"/>
    <lineage>
        <taxon>Eukaryota</taxon>
        <taxon>Metazoa</taxon>
        <taxon>Ecdysozoa</taxon>
        <taxon>Arthropoda</taxon>
        <taxon>Hexapoda</taxon>
        <taxon>Insecta</taxon>
        <taxon>Pterygota</taxon>
        <taxon>Neoptera</taxon>
        <taxon>Endopterygota</taxon>
        <taxon>Diptera</taxon>
        <taxon>Brachycera</taxon>
        <taxon>Muscomorpha</taxon>
        <taxon>Oestroidea</taxon>
        <taxon>Sarcophagidae</taxon>
        <taxon>Sarcophaga</taxon>
        <taxon>Neobellieria</taxon>
    </lineage>
</organism>
<accession>P51588</accession>
<protein>
    <recommendedName>
        <fullName>Trypsin</fullName>
        <ecNumber>3.4.21.4</ecNumber>
    </recommendedName>
</protein>
<reference key="1">
    <citation type="journal article" date="1996" name="Eur. J. Biochem.">
        <title>Molecular sequencing and modeling of Neobellieria bullata trypsin. Evidence for translational control by Neobellieria trypsin-modulating oostatic factor.</title>
        <authorList>
            <person name="Borovsky D."/>
            <person name="Janssen I."/>
            <person name="Vanden Broeck J."/>
            <person name="Huybrechts R."/>
            <person name="Verhaert P."/>
            <person name="de Bondt H.L."/>
            <person name="Bylemans D."/>
            <person name="de Loof A."/>
        </authorList>
    </citation>
    <scope>NUCLEOTIDE SEQUENCE [MRNA]</scope>
    <scope>PROTEIN SEQUENCE OF 27-36</scope>
    <scope>3D-STRUCTURE MODELING</scope>
    <source>
        <tissue>Gut</tissue>
    </source>
</reference>